<protein>
    <recommendedName>
        <fullName evidence="6">3beta,22alpha-dihydroxysteroid 3-dehydrogenase</fullName>
        <ecNumber evidence="3">1.14.19.79</ecNumber>
    </recommendedName>
    <alternativeName>
        <fullName evidence="4">(22R,23R)-22,23-dihydroxy-campest-4-en-3-one synthase</fullName>
    </alternativeName>
    <alternativeName>
        <fullName evidence="4">(22S,24R)-22-hydroxy-5alpha-ergostan-3-one synthase</fullName>
    </alternativeName>
    <alternativeName>
        <fullName evidence="4">(22S,24R)-22-hydroxyergost-4-en-3-one synthase</fullName>
    </alternativeName>
    <alternativeName>
        <fullName evidence="4">3-dehydro-6-deoxoteasterone synthase</fullName>
    </alternativeName>
    <alternativeName>
        <fullName evidence="5">Cytochrome P450 90A1</fullName>
        <shortName evidence="5">AtCYP90A1</shortName>
    </alternativeName>
    <alternativeName>
        <fullName evidence="4 5">Protein CONSTITUTIVE PHOTOMORPHOGENESIS AND DWARFISM</fullName>
    </alternativeName>
</protein>
<reference key="1">
    <citation type="journal article" date="1996" name="Cell">
        <title>Brassinosteroids rescue the deficiency of CYP90, a cytochrome P450, controlling cell elongation and de-etiolation in Arabidopsis.</title>
        <authorList>
            <person name="Szekeres M."/>
            <person name="Nemeth K."/>
            <person name="Koncz-Kalman Z."/>
            <person name="Mathur J."/>
            <person name="Kauschmann A."/>
            <person name="Altmann T."/>
            <person name="Redei G.P."/>
            <person name="Nagy F."/>
            <person name="Schell J."/>
            <person name="Koncz C."/>
        </authorList>
    </citation>
    <scope>NUCLEOTIDE SEQUENCE [GENOMIC DNA / MRNA]</scope>
    <source>
        <strain>cv. Columbia</strain>
    </source>
</reference>
<reference key="2">
    <citation type="journal article" date="1997" name="DNA Res.">
        <title>Structural analysis of Arabidopsis thaliana chromosome 5. I. Sequence features of the 1.6 Mb regions covered by twenty physically assigned P1 clones.</title>
        <authorList>
            <person name="Sato S."/>
            <person name="Kotani H."/>
            <person name="Nakamura Y."/>
            <person name="Kaneko T."/>
            <person name="Asamizu E."/>
            <person name="Fukami M."/>
            <person name="Miyajima N."/>
            <person name="Tabata S."/>
        </authorList>
    </citation>
    <scope>NUCLEOTIDE SEQUENCE [LARGE SCALE GENOMIC DNA]</scope>
    <source>
        <strain>cv. Columbia</strain>
    </source>
</reference>
<reference key="3">
    <citation type="journal article" date="2017" name="Plant J.">
        <title>Araport11: a complete reannotation of the Arabidopsis thaliana reference genome.</title>
        <authorList>
            <person name="Cheng C.Y."/>
            <person name="Krishnakumar V."/>
            <person name="Chan A.P."/>
            <person name="Thibaud-Nissen F."/>
            <person name="Schobel S."/>
            <person name="Town C.D."/>
        </authorList>
    </citation>
    <scope>GENOME REANNOTATION</scope>
    <source>
        <strain>cv. Columbia</strain>
    </source>
</reference>
<reference key="4">
    <citation type="journal article" date="2003" name="Science">
        <title>Empirical analysis of transcriptional activity in the Arabidopsis genome.</title>
        <authorList>
            <person name="Yamada K."/>
            <person name="Lim J."/>
            <person name="Dale J.M."/>
            <person name="Chen H."/>
            <person name="Shinn P."/>
            <person name="Palm C.J."/>
            <person name="Southwick A.M."/>
            <person name="Wu H.C."/>
            <person name="Kim C.J."/>
            <person name="Nguyen M."/>
            <person name="Pham P.K."/>
            <person name="Cheuk R.F."/>
            <person name="Karlin-Newmann G."/>
            <person name="Liu S.X."/>
            <person name="Lam B."/>
            <person name="Sakano H."/>
            <person name="Wu T."/>
            <person name="Yu G."/>
            <person name="Miranda M."/>
            <person name="Quach H.L."/>
            <person name="Tripp M."/>
            <person name="Chang C.H."/>
            <person name="Lee J.M."/>
            <person name="Toriumi M.J."/>
            <person name="Chan M.M."/>
            <person name="Tang C.C."/>
            <person name="Onodera C.S."/>
            <person name="Deng J.M."/>
            <person name="Akiyama K."/>
            <person name="Ansari Y."/>
            <person name="Arakawa T."/>
            <person name="Banh J."/>
            <person name="Banno F."/>
            <person name="Bowser L."/>
            <person name="Brooks S.Y."/>
            <person name="Carninci P."/>
            <person name="Chao Q."/>
            <person name="Choy N."/>
            <person name="Enju A."/>
            <person name="Goldsmith A.D."/>
            <person name="Gurjal M."/>
            <person name="Hansen N.F."/>
            <person name="Hayashizaki Y."/>
            <person name="Johnson-Hopson C."/>
            <person name="Hsuan V.W."/>
            <person name="Iida K."/>
            <person name="Karnes M."/>
            <person name="Khan S."/>
            <person name="Koesema E."/>
            <person name="Ishida J."/>
            <person name="Jiang P.X."/>
            <person name="Jones T."/>
            <person name="Kawai J."/>
            <person name="Kamiya A."/>
            <person name="Meyers C."/>
            <person name="Nakajima M."/>
            <person name="Narusaka M."/>
            <person name="Seki M."/>
            <person name="Sakurai T."/>
            <person name="Satou M."/>
            <person name="Tamse R."/>
            <person name="Vaysberg M."/>
            <person name="Wallender E.K."/>
            <person name="Wong C."/>
            <person name="Yamamura Y."/>
            <person name="Yuan S."/>
            <person name="Shinozaki K."/>
            <person name="Davis R.W."/>
            <person name="Theologis A."/>
            <person name="Ecker J.R."/>
        </authorList>
    </citation>
    <scope>NUCLEOTIDE SEQUENCE [LARGE SCALE MRNA]</scope>
    <source>
        <strain>cv. Columbia</strain>
    </source>
</reference>
<reference key="5">
    <citation type="submission" date="2002-03" db="EMBL/GenBank/DDBJ databases">
        <title>Full-length cDNA from Arabidopsis thaliana.</title>
        <authorList>
            <person name="Brover V.V."/>
            <person name="Troukhan M.E."/>
            <person name="Alexandrov N.A."/>
            <person name="Lu Y.-P."/>
            <person name="Flavell R.B."/>
            <person name="Feldmann K.A."/>
        </authorList>
    </citation>
    <scope>NUCLEOTIDE SEQUENCE [LARGE SCALE MRNA]</scope>
</reference>
<reference key="6">
    <citation type="journal article" date="2012" name="J. Biol. Chem.">
        <title>CYP90A1/CPD, a brassinosteroid biosynthetic cytochrome P450 of Arabidopsis, catalyzes C-3 oxidation.</title>
        <authorList>
            <person name="Ohnishi T."/>
            <person name="Godza B."/>
            <person name="Watanabe B."/>
            <person name="Fujioka S."/>
            <person name="Hategan L."/>
            <person name="Ide K."/>
            <person name="Shibata K."/>
            <person name="Yokota T."/>
            <person name="Szekeres M."/>
            <person name="Mizutani M."/>
        </authorList>
    </citation>
    <scope>FUNCTION</scope>
    <scope>CATALYTIC ACTIVITY</scope>
    <scope>PATHWAY</scope>
    <scope>DISRUPTION PHENOTYPE</scope>
    <scope>BIOPHYSICOCHEMICAL PROPERTIES</scope>
    <source>
        <strain>cv. Columbia</strain>
    </source>
</reference>
<feature type="chain" id="PRO_0000052184" description="3beta,22alpha-dihydroxysteroid 3-dehydrogenase">
    <location>
        <begin position="1"/>
        <end position="472"/>
    </location>
</feature>
<feature type="transmembrane region" description="Helical" evidence="2">
    <location>
        <begin position="1"/>
        <end position="21"/>
    </location>
</feature>
<feature type="binding site" description="axial binding residue" evidence="1">
    <location>
        <position position="418"/>
    </location>
    <ligand>
        <name>heme</name>
        <dbReference type="ChEBI" id="CHEBI:30413"/>
    </ligand>
    <ligandPart>
        <name>Fe</name>
        <dbReference type="ChEBI" id="CHEBI:18248"/>
    </ligandPart>
</feature>
<evidence type="ECO:0000250" key="1">
    <source>
        <dbReference type="UniProtKB" id="P04798"/>
    </source>
</evidence>
<evidence type="ECO:0000255" key="2"/>
<evidence type="ECO:0000269" key="3">
    <source>
    </source>
</evidence>
<evidence type="ECO:0000303" key="4">
    <source>
    </source>
</evidence>
<evidence type="ECO:0000303" key="5">
    <source>
    </source>
</evidence>
<evidence type="ECO:0000305" key="6"/>
<evidence type="ECO:0000312" key="7">
    <source>
        <dbReference type="Araport" id="AT5G05690"/>
    </source>
</evidence>
<evidence type="ECO:0000312" key="8">
    <source>
        <dbReference type="EMBL" id="BAB09663.1"/>
    </source>
</evidence>
<accession>Q42569</accession>
<gene>
    <name evidence="5" type="primary">CYP90A1</name>
    <name evidence="4 5" type="synonym">CPD</name>
    <name evidence="5" type="synonym">CYP90</name>
    <name evidence="7" type="ordered locus">At5g05690</name>
    <name evidence="8" type="ORF">MJJ3.9</name>
</gene>
<sequence>MAFTAFLLLLSSIAAGFLLLLRRTRYRRMGLPPGSLGLPLIGETFQLIGAYKTENPEPFIDERVARYGSVFMTHLFGEPTIFSADPETNRFVLQNEGKLFECSYPASICNLLGKHSLLLMKGSLHKRMHSLTMSFANSSIIKDHLMLDIDRLVRFNLDSWSSRVLLMEEAKKITFELTVKQLMSFDPGEWSESLRKEYLLVIEGFFSLPLPLFSTTYRKAIQARRKVAEALTVVVMKRREEEEEGAERKKDMLAALLAADDGFSDEEIVDFLVALLVAGYETTSTIMTLAVKFLTETPLALAQLKEEHEKIRAMKSDSYSLEWSDYKSMPFTQCVVNETLRVANIIGGVFRRAMTDVEIKGYKIPKGWKVFSSFRAVHLDPNHFKDARTFNPWRWQSNSVTTGPSNVFTPFGGGPRLCPGYELARVALSVFLHRLVTGFSWVPAEQDKLVFFPTTRTQKRYPIFVKRRDFAT</sequence>
<organism>
    <name type="scientific">Arabidopsis thaliana</name>
    <name type="common">Mouse-ear cress</name>
    <dbReference type="NCBI Taxonomy" id="3702"/>
    <lineage>
        <taxon>Eukaryota</taxon>
        <taxon>Viridiplantae</taxon>
        <taxon>Streptophyta</taxon>
        <taxon>Embryophyta</taxon>
        <taxon>Tracheophyta</taxon>
        <taxon>Spermatophyta</taxon>
        <taxon>Magnoliopsida</taxon>
        <taxon>eudicotyledons</taxon>
        <taxon>Gunneridae</taxon>
        <taxon>Pentapetalae</taxon>
        <taxon>rosids</taxon>
        <taxon>malvids</taxon>
        <taxon>Brassicales</taxon>
        <taxon>Brassicaceae</taxon>
        <taxon>Camelineae</taxon>
        <taxon>Arabidopsis</taxon>
    </lineage>
</organism>
<proteinExistence type="evidence at protein level"/>
<comment type="function">
    <text evidence="3">Catalyzes C3-oxidation steps in brassinosteroids biosynthesis (PubMed:22822057). Converts (22S)-22-hydroxycampesterol (22-OHCR) to (22S,24R)-22-hydroxyergost-4-en-3-one (22-hydroxy-campesta-4-en-3-one, 22-OH-4-en-3-one), 6-deoxocathasterone (6-deoxoCT) to (22S,24R)-22-hydroxy-5alpha-ergostan-3-one (22-hydroxy-campesta-3-one, 22-OH-3-one), (22R,23R)-22,23-dihydroxycampesterol (22,23-diOHCR) to (22R,23R)-22,23-dihydroxy-campest-4-en-3-one (22,23-diOH-4-en-3-one), and 6-deoxoteasterone (6-deoxoTE) to 3-dehydro-6-deoxoteasterone (6-deoxo3DT, 6-deoxo-3-DHT) (PubMed:22822057).</text>
</comment>
<comment type="catalytic activity">
    <reaction evidence="3">
        <text>(22S)-22-hydroxycampesterol + reduced [NADPH--hemoprotein reductase] + O2 = (22S)-22-hydroxycampest-4-en-3-one + oxidized [NADPH--hemoprotein reductase] + 2 H2O + H(+)</text>
        <dbReference type="Rhea" id="RHEA:69971"/>
        <dbReference type="Rhea" id="RHEA-COMP:11964"/>
        <dbReference type="Rhea" id="RHEA-COMP:11965"/>
        <dbReference type="ChEBI" id="CHEBI:15377"/>
        <dbReference type="ChEBI" id="CHEBI:15378"/>
        <dbReference type="ChEBI" id="CHEBI:15379"/>
        <dbReference type="ChEBI" id="CHEBI:57618"/>
        <dbReference type="ChEBI" id="CHEBI:58210"/>
        <dbReference type="ChEBI" id="CHEBI:72330"/>
        <dbReference type="ChEBI" id="CHEBI:72331"/>
        <dbReference type="EC" id="1.14.19.79"/>
    </reaction>
    <physiologicalReaction direction="left-to-right" evidence="3">
        <dbReference type="Rhea" id="RHEA:69972"/>
    </physiologicalReaction>
</comment>
<comment type="catalytic activity">
    <reaction evidence="3">
        <text>6-deoxoteasterone + reduced [NADPH--hemoprotein reductase] + O2 = 3-dehydro-6-deoxoteasterone + oxidized [NADPH--hemoprotein reductase] + 2 H2O + H(+)</text>
        <dbReference type="Rhea" id="RHEA:69983"/>
        <dbReference type="Rhea" id="RHEA-COMP:11964"/>
        <dbReference type="Rhea" id="RHEA-COMP:11965"/>
        <dbReference type="ChEBI" id="CHEBI:15377"/>
        <dbReference type="ChEBI" id="CHEBI:15378"/>
        <dbReference type="ChEBI" id="CHEBI:15379"/>
        <dbReference type="ChEBI" id="CHEBI:20710"/>
        <dbReference type="ChEBI" id="CHEBI:20716"/>
        <dbReference type="ChEBI" id="CHEBI:57618"/>
        <dbReference type="ChEBI" id="CHEBI:58210"/>
        <dbReference type="EC" id="1.14.19.79"/>
    </reaction>
    <physiologicalReaction direction="left-to-right" evidence="3">
        <dbReference type="Rhea" id="RHEA:69984"/>
    </physiologicalReaction>
</comment>
<comment type="catalytic activity">
    <reaction evidence="3">
        <text>6-deoxycathasterone + reduced [NADPH--hemoprotein reductase] + O2 = (22S,24R)-22-hydroxy-5alpha-ergostan-3-one + oxidized [NADPH--hemoprotein reductase] + 2 H2O + H(+)</text>
        <dbReference type="Rhea" id="RHEA:69975"/>
        <dbReference type="Rhea" id="RHEA-COMP:11964"/>
        <dbReference type="Rhea" id="RHEA-COMP:11965"/>
        <dbReference type="ChEBI" id="CHEBI:15377"/>
        <dbReference type="ChEBI" id="CHEBI:15378"/>
        <dbReference type="ChEBI" id="CHEBI:15379"/>
        <dbReference type="ChEBI" id="CHEBI:20714"/>
        <dbReference type="ChEBI" id="CHEBI:57618"/>
        <dbReference type="ChEBI" id="CHEBI:58210"/>
        <dbReference type="ChEBI" id="CHEBI:59411"/>
    </reaction>
</comment>
<comment type="catalytic activity">
    <reaction evidence="3">
        <text>(22R,23R)-22,23-dihydroxycampesterol + reduced [NADPH--hemoprotein reductase] + O2 = (22R,23R)-22,23-dihydroxycampest-4-en-3-one + oxidized [NADPH--hemoprotein reductase] + 2 H2O + H(+)</text>
        <dbReference type="Rhea" id="RHEA:69979"/>
        <dbReference type="Rhea" id="RHEA-COMP:11964"/>
        <dbReference type="Rhea" id="RHEA-COMP:11965"/>
        <dbReference type="ChEBI" id="CHEBI:15377"/>
        <dbReference type="ChEBI" id="CHEBI:15378"/>
        <dbReference type="ChEBI" id="CHEBI:15379"/>
        <dbReference type="ChEBI" id="CHEBI:57618"/>
        <dbReference type="ChEBI" id="CHEBI:58210"/>
        <dbReference type="ChEBI" id="CHEBI:80401"/>
        <dbReference type="ChEBI" id="CHEBI:80402"/>
    </reaction>
    <physiologicalReaction direction="left-to-right" evidence="3">
        <dbReference type="Rhea" id="RHEA:69980"/>
    </physiologicalReaction>
</comment>
<comment type="cofactor">
    <cofactor evidence="1">
        <name>heme</name>
        <dbReference type="ChEBI" id="CHEBI:30413"/>
    </cofactor>
</comment>
<comment type="biophysicochemical properties">
    <kinetics>
        <KM evidence="3">0.96 uM for (22S)-22-hydroxycampesterol</KM>
        <KM evidence="3">1.9 uM for (22R,23R)-22,23-dihydroxycampesterol</KM>
        <text evidence="3">kcat is 0.74 min(-1) for (22S)-22-hydroxycampesterol (PubMed:22822057). kcat is 0.11 min(-1) for (22R,23R)-22,23-dihydroxycampesterol (PubMed:22822057).</text>
    </kinetics>
</comment>
<comment type="pathway">
    <text evidence="3">Plant hormone biosynthesis; brassinosteroid biosynthesis.</text>
</comment>
<comment type="interaction">
    <interactant intactId="EBI-17071660">
        <id>Q42569</id>
    </interactant>
    <interactant intactId="EBI-25520805">
        <id>Q9M391</id>
        <label>At3g54130</label>
    </interactant>
    <organismsDiffer>false</organismsDiffer>
    <experiments>3</experiments>
</comment>
<comment type="subcellular location">
    <subcellularLocation>
        <location evidence="2">Membrane</location>
        <topology evidence="2">Single-pass membrane protein</topology>
    </subcellularLocation>
</comment>
<comment type="alternative products">
    <event type="alternative splicing"/>
    <isoform>
        <id>Q42569-1</id>
        <name>1</name>
        <sequence type="displayed"/>
    </isoform>
    <text>A number of isoforms are produced. According to EST sequences.</text>
</comment>
<comment type="disruption phenotype">
    <text evidence="3">Dwarf plants containing severely reduced levels of castasterone (CS) and brassinolide (BL) and of their precursor molecules.</text>
</comment>
<comment type="similarity">
    <text evidence="6">Belongs to the cytochrome P450 family.</text>
</comment>
<name>C90A1_ARATH</name>
<dbReference type="EC" id="1.14.19.79" evidence="3"/>
<dbReference type="EMBL" id="X87367">
    <property type="protein sequence ID" value="CAA60793.1"/>
    <property type="molecule type" value="mRNA"/>
</dbReference>
<dbReference type="EMBL" id="X87368">
    <property type="protein sequence ID" value="CAA60794.1"/>
    <property type="molecule type" value="Genomic_DNA"/>
</dbReference>
<dbReference type="EMBL" id="AB005237">
    <property type="protein sequence ID" value="BAB09663.1"/>
    <property type="molecule type" value="Genomic_DNA"/>
</dbReference>
<dbReference type="EMBL" id="CP002688">
    <property type="protein sequence ID" value="AED90909.1"/>
    <property type="molecule type" value="Genomic_DNA"/>
</dbReference>
<dbReference type="EMBL" id="AY042837">
    <property type="protein sequence ID" value="AAK68777.1"/>
    <property type="molecule type" value="mRNA"/>
</dbReference>
<dbReference type="EMBL" id="AY052726">
    <property type="protein sequence ID" value="AAK96630.1"/>
    <property type="molecule type" value="mRNA"/>
</dbReference>
<dbReference type="EMBL" id="AY063722">
    <property type="protein sequence ID" value="AAL36072.1"/>
    <property type="molecule type" value="mRNA"/>
</dbReference>
<dbReference type="EMBL" id="AY081480">
    <property type="protein sequence ID" value="AAM10042.1"/>
    <property type="molecule type" value="mRNA"/>
</dbReference>
<dbReference type="EMBL" id="AY087526">
    <property type="protein sequence ID" value="AAM65068.1"/>
    <property type="molecule type" value="mRNA"/>
</dbReference>
<dbReference type="PIR" id="S55379">
    <property type="entry name" value="S55379"/>
</dbReference>
<dbReference type="RefSeq" id="NP_196188.1">
    <molecule id="Q42569-1"/>
    <property type="nucleotide sequence ID" value="NM_120651.3"/>
</dbReference>
<dbReference type="SMR" id="Q42569"/>
<dbReference type="BioGRID" id="15732">
    <property type="interactions" value="3"/>
</dbReference>
<dbReference type="FunCoup" id="Q42569">
    <property type="interactions" value="269"/>
</dbReference>
<dbReference type="IntAct" id="Q42569">
    <property type="interactions" value="2"/>
</dbReference>
<dbReference type="STRING" id="3702.Q42569"/>
<dbReference type="iPTMnet" id="Q42569"/>
<dbReference type="PaxDb" id="3702-AT5G05690.1"/>
<dbReference type="EnsemblPlants" id="AT5G05690.1">
    <molecule id="Q42569-1"/>
    <property type="protein sequence ID" value="AT5G05690.1"/>
    <property type="gene ID" value="AT5G05690"/>
</dbReference>
<dbReference type="GeneID" id="830453"/>
<dbReference type="Gramene" id="AT5G05690.1">
    <molecule id="Q42569-1"/>
    <property type="protein sequence ID" value="AT5G05690.1"/>
    <property type="gene ID" value="AT5G05690"/>
</dbReference>
<dbReference type="KEGG" id="ath:AT5G05690"/>
<dbReference type="Araport" id="AT5G05690"/>
<dbReference type="TAIR" id="AT5G05690">
    <property type="gene designation" value="CPD"/>
</dbReference>
<dbReference type="eggNOG" id="KOG0157">
    <property type="taxonomic scope" value="Eukaryota"/>
</dbReference>
<dbReference type="HOGENOM" id="CLU_001570_15_5_1"/>
<dbReference type="InParanoid" id="Q42569"/>
<dbReference type="OMA" id="MIIHSTR"/>
<dbReference type="PhylomeDB" id="Q42569"/>
<dbReference type="BioCyc" id="ARA:AT5G05690-MONOMER"/>
<dbReference type="BioCyc" id="MetaCyc:AT5G05690-MONOMER"/>
<dbReference type="UniPathway" id="UPA00381"/>
<dbReference type="PRO" id="PR:Q42569"/>
<dbReference type="Proteomes" id="UP000006548">
    <property type="component" value="Chromosome 5"/>
</dbReference>
<dbReference type="ExpressionAtlas" id="Q42569">
    <property type="expression patterns" value="baseline and differential"/>
</dbReference>
<dbReference type="GO" id="GO:0016020">
    <property type="term" value="C:membrane"/>
    <property type="evidence" value="ECO:0007669"/>
    <property type="project" value="UniProtKB-SubCell"/>
</dbReference>
<dbReference type="GO" id="GO:0020037">
    <property type="term" value="F:heme binding"/>
    <property type="evidence" value="ECO:0007669"/>
    <property type="project" value="InterPro"/>
</dbReference>
<dbReference type="GO" id="GO:0005506">
    <property type="term" value="F:iron ion binding"/>
    <property type="evidence" value="ECO:0007669"/>
    <property type="project" value="InterPro"/>
</dbReference>
<dbReference type="GO" id="GO:0004497">
    <property type="term" value="F:monooxygenase activity"/>
    <property type="evidence" value="ECO:0007669"/>
    <property type="project" value="UniProtKB-KW"/>
</dbReference>
<dbReference type="GO" id="GO:0016705">
    <property type="term" value="F:oxidoreductase activity, acting on paired donors, with incorporation or reduction of molecular oxygen"/>
    <property type="evidence" value="ECO:0007669"/>
    <property type="project" value="InterPro"/>
</dbReference>
<dbReference type="GO" id="GO:0048657">
    <property type="term" value="P:anther wall tapetum cell differentiation"/>
    <property type="evidence" value="ECO:0000315"/>
    <property type="project" value="TAIR"/>
</dbReference>
<dbReference type="GO" id="GO:0016132">
    <property type="term" value="P:brassinosteroid biosynthetic process"/>
    <property type="evidence" value="ECO:0000315"/>
    <property type="project" value="TAIR"/>
</dbReference>
<dbReference type="GO" id="GO:0010268">
    <property type="term" value="P:brassinosteroid homeostasis"/>
    <property type="evidence" value="ECO:0000270"/>
    <property type="project" value="TAIR"/>
</dbReference>
<dbReference type="GO" id="GO:0010584">
    <property type="term" value="P:pollen exine formation"/>
    <property type="evidence" value="ECO:0000315"/>
    <property type="project" value="TAIR"/>
</dbReference>
<dbReference type="GO" id="GO:0009911">
    <property type="term" value="P:positive regulation of flower development"/>
    <property type="evidence" value="ECO:0000316"/>
    <property type="project" value="TAIR"/>
</dbReference>
<dbReference type="GO" id="GO:0010224">
    <property type="term" value="P:response to UV-B"/>
    <property type="evidence" value="ECO:0000316"/>
    <property type="project" value="TAIR"/>
</dbReference>
<dbReference type="CDD" id="cd11043">
    <property type="entry name" value="CYP90-like"/>
    <property type="match status" value="1"/>
</dbReference>
<dbReference type="FunFam" id="1.10.630.10:FF:000046">
    <property type="entry name" value="Cytochrome P450 90A1"/>
    <property type="match status" value="1"/>
</dbReference>
<dbReference type="Gene3D" id="1.10.630.10">
    <property type="entry name" value="Cytochrome P450"/>
    <property type="match status" value="1"/>
</dbReference>
<dbReference type="InterPro" id="IPR001128">
    <property type="entry name" value="Cyt_P450"/>
</dbReference>
<dbReference type="InterPro" id="IPR017972">
    <property type="entry name" value="Cyt_P450_CS"/>
</dbReference>
<dbReference type="InterPro" id="IPR002401">
    <property type="entry name" value="Cyt_P450_E_grp-I"/>
</dbReference>
<dbReference type="InterPro" id="IPR036396">
    <property type="entry name" value="Cyt_P450_sf"/>
</dbReference>
<dbReference type="PANTHER" id="PTHR24286:SF44">
    <property type="entry name" value="3BETA,22ALPHA-DIHYDROXYSTEROID 3-DEHYDROGENASE"/>
    <property type="match status" value="1"/>
</dbReference>
<dbReference type="PANTHER" id="PTHR24286">
    <property type="entry name" value="CYTOCHROME P450 26"/>
    <property type="match status" value="1"/>
</dbReference>
<dbReference type="Pfam" id="PF00067">
    <property type="entry name" value="p450"/>
    <property type="match status" value="1"/>
</dbReference>
<dbReference type="PRINTS" id="PR00463">
    <property type="entry name" value="EP450I"/>
</dbReference>
<dbReference type="PRINTS" id="PR00385">
    <property type="entry name" value="P450"/>
</dbReference>
<dbReference type="SUPFAM" id="SSF48264">
    <property type="entry name" value="Cytochrome P450"/>
    <property type="match status" value="1"/>
</dbReference>
<dbReference type="PROSITE" id="PS00086">
    <property type="entry name" value="CYTOCHROME_P450"/>
    <property type="match status" value="1"/>
</dbReference>
<keyword id="KW-0025">Alternative splicing</keyword>
<keyword id="KW-0349">Heme</keyword>
<keyword id="KW-0408">Iron</keyword>
<keyword id="KW-0472">Membrane</keyword>
<keyword id="KW-0479">Metal-binding</keyword>
<keyword id="KW-0503">Monooxygenase</keyword>
<keyword id="KW-0560">Oxidoreductase</keyword>
<keyword id="KW-1185">Reference proteome</keyword>
<keyword id="KW-0812">Transmembrane</keyword>
<keyword id="KW-1133">Transmembrane helix</keyword>